<organism>
    <name type="scientific">Canis lupus familiaris</name>
    <name type="common">Dog</name>
    <name type="synonym">Canis familiaris</name>
    <dbReference type="NCBI Taxonomy" id="9615"/>
    <lineage>
        <taxon>Eukaryota</taxon>
        <taxon>Metazoa</taxon>
        <taxon>Chordata</taxon>
        <taxon>Craniata</taxon>
        <taxon>Vertebrata</taxon>
        <taxon>Euteleostomi</taxon>
        <taxon>Mammalia</taxon>
        <taxon>Eutheria</taxon>
        <taxon>Laurasiatheria</taxon>
        <taxon>Carnivora</taxon>
        <taxon>Caniformia</taxon>
        <taxon>Canidae</taxon>
        <taxon>Canis</taxon>
    </lineage>
</organism>
<protein>
    <recommendedName>
        <fullName>Pro-epidermal growth factor</fullName>
        <shortName>EGF</shortName>
    </recommendedName>
    <component>
        <recommendedName>
            <fullName>Epidermal growth factor</fullName>
        </recommendedName>
    </component>
</protein>
<dbReference type="EMBL" id="AB049597">
    <property type="protein sequence ID" value="BAB40599.1"/>
    <property type="molecule type" value="mRNA"/>
</dbReference>
<dbReference type="RefSeq" id="NP_001003094.1">
    <property type="nucleotide sequence ID" value="NM_001003094.1"/>
</dbReference>
<dbReference type="SMR" id="Q9BEA0"/>
<dbReference type="FunCoup" id="Q9BEA0">
    <property type="interactions" value="294"/>
</dbReference>
<dbReference type="STRING" id="9615.ENSCAFP00000016954"/>
<dbReference type="GlyCosmos" id="Q9BEA0">
    <property type="glycosylation" value="8 sites, No reported glycans"/>
</dbReference>
<dbReference type="PaxDb" id="9612-ENSCAFP00000016954"/>
<dbReference type="GeneID" id="403657"/>
<dbReference type="KEGG" id="cfa:403657"/>
<dbReference type="CTD" id="1950"/>
<dbReference type="eggNOG" id="KOG1215">
    <property type="taxonomic scope" value="Eukaryota"/>
</dbReference>
<dbReference type="InParanoid" id="Q9BEA0"/>
<dbReference type="OrthoDB" id="4062651at2759"/>
<dbReference type="Proteomes" id="UP000002254">
    <property type="component" value="Unplaced"/>
</dbReference>
<dbReference type="Proteomes" id="UP000694429">
    <property type="component" value="Unplaced"/>
</dbReference>
<dbReference type="Proteomes" id="UP000694542">
    <property type="component" value="Unplaced"/>
</dbReference>
<dbReference type="Proteomes" id="UP000805418">
    <property type="component" value="Unplaced"/>
</dbReference>
<dbReference type="GO" id="GO:0005886">
    <property type="term" value="C:plasma membrane"/>
    <property type="evidence" value="ECO:0000318"/>
    <property type="project" value="GO_Central"/>
</dbReference>
<dbReference type="GO" id="GO:0005509">
    <property type="term" value="F:calcium ion binding"/>
    <property type="evidence" value="ECO:0007669"/>
    <property type="project" value="InterPro"/>
</dbReference>
<dbReference type="GO" id="GO:0008083">
    <property type="term" value="F:growth factor activity"/>
    <property type="evidence" value="ECO:0000318"/>
    <property type="project" value="GO_Central"/>
</dbReference>
<dbReference type="GO" id="GO:0007173">
    <property type="term" value="P:epidermal growth factor receptor signaling pathway"/>
    <property type="evidence" value="ECO:0000318"/>
    <property type="project" value="GO_Central"/>
</dbReference>
<dbReference type="GO" id="GO:0008284">
    <property type="term" value="P:positive regulation of cell population proliferation"/>
    <property type="evidence" value="ECO:0000250"/>
    <property type="project" value="UniProtKB"/>
</dbReference>
<dbReference type="GO" id="GO:0043388">
    <property type="term" value="P:positive regulation of DNA binding"/>
    <property type="evidence" value="ECO:0000250"/>
    <property type="project" value="UniProtKB"/>
</dbReference>
<dbReference type="GO" id="GO:0043410">
    <property type="term" value="P:positive regulation of MAPK cascade"/>
    <property type="evidence" value="ECO:0000250"/>
    <property type="project" value="UniProtKB"/>
</dbReference>
<dbReference type="GO" id="GO:0046425">
    <property type="term" value="P:regulation of receptor signaling pathway via JAK-STAT"/>
    <property type="evidence" value="ECO:0000250"/>
    <property type="project" value="UniProtKB"/>
</dbReference>
<dbReference type="CDD" id="cd00054">
    <property type="entry name" value="EGF_CA"/>
    <property type="match status" value="2"/>
</dbReference>
<dbReference type="FunFam" id="2.10.25.10:FF:000010">
    <property type="entry name" value="Pro-epidermal growth factor"/>
    <property type="match status" value="1"/>
</dbReference>
<dbReference type="FunFam" id="2.10.25.10:FF:000219">
    <property type="entry name" value="Pro-epidermal growth factor"/>
    <property type="match status" value="1"/>
</dbReference>
<dbReference type="FunFam" id="2.10.25.10:FF:000254">
    <property type="entry name" value="Pro-epidermal growth factor"/>
    <property type="match status" value="1"/>
</dbReference>
<dbReference type="FunFam" id="2.10.25.10:FF:000300">
    <property type="entry name" value="Pro-epidermal growth factor"/>
    <property type="match status" value="1"/>
</dbReference>
<dbReference type="FunFam" id="2.10.25.10:FF:000345">
    <property type="entry name" value="Pro-epidermal growth factor"/>
    <property type="match status" value="1"/>
</dbReference>
<dbReference type="FunFam" id="2.10.25.10:FF:000362">
    <property type="entry name" value="Pro-epidermal growth factor"/>
    <property type="match status" value="1"/>
</dbReference>
<dbReference type="FunFam" id="2.10.25.10:FF:000409">
    <property type="entry name" value="Pro-epidermal growth factor"/>
    <property type="match status" value="1"/>
</dbReference>
<dbReference type="FunFam" id="2.120.10.30:FF:000028">
    <property type="entry name" value="Pro-epidermal growth factor"/>
    <property type="match status" value="1"/>
</dbReference>
<dbReference type="FunFam" id="2.120.10.30:FF:000036">
    <property type="entry name" value="Pro-epidermal growth factor"/>
    <property type="match status" value="1"/>
</dbReference>
<dbReference type="Gene3D" id="2.10.25.10">
    <property type="entry name" value="Laminin"/>
    <property type="match status" value="7"/>
</dbReference>
<dbReference type="Gene3D" id="2.120.10.30">
    <property type="entry name" value="TolB, C-terminal domain"/>
    <property type="match status" value="2"/>
</dbReference>
<dbReference type="InterPro" id="IPR011042">
    <property type="entry name" value="6-blade_b-propeller_TolB-like"/>
</dbReference>
<dbReference type="InterPro" id="IPR026823">
    <property type="entry name" value="cEGF"/>
</dbReference>
<dbReference type="InterPro" id="IPR050778">
    <property type="entry name" value="Cueball_EGF_LRP_Nidogen"/>
</dbReference>
<dbReference type="InterPro" id="IPR001881">
    <property type="entry name" value="EGF-like_Ca-bd_dom"/>
</dbReference>
<dbReference type="InterPro" id="IPR000742">
    <property type="entry name" value="EGF-like_dom"/>
</dbReference>
<dbReference type="InterPro" id="IPR000152">
    <property type="entry name" value="EGF-type_Asp/Asn_hydroxyl_site"/>
</dbReference>
<dbReference type="InterPro" id="IPR018097">
    <property type="entry name" value="EGF_Ca-bd_CS"/>
</dbReference>
<dbReference type="InterPro" id="IPR009030">
    <property type="entry name" value="Growth_fac_rcpt_cys_sf"/>
</dbReference>
<dbReference type="InterPro" id="IPR000033">
    <property type="entry name" value="LDLR_classB_rpt"/>
</dbReference>
<dbReference type="InterPro" id="IPR049883">
    <property type="entry name" value="NOTCH1_EGF-like"/>
</dbReference>
<dbReference type="InterPro" id="IPR016317">
    <property type="entry name" value="Pro-epidermal_GF"/>
</dbReference>
<dbReference type="PANTHER" id="PTHR46513:SF5">
    <property type="entry name" value="PRO-EPIDERMAL GROWTH FACTOR"/>
    <property type="match status" value="1"/>
</dbReference>
<dbReference type="PANTHER" id="PTHR46513">
    <property type="entry name" value="VITELLOGENIN RECEPTOR-LIKE PROTEIN-RELATED-RELATED"/>
    <property type="match status" value="1"/>
</dbReference>
<dbReference type="Pfam" id="PF12662">
    <property type="entry name" value="cEGF"/>
    <property type="match status" value="2"/>
</dbReference>
<dbReference type="Pfam" id="PF00008">
    <property type="entry name" value="EGF"/>
    <property type="match status" value="1"/>
</dbReference>
<dbReference type="Pfam" id="PF07645">
    <property type="entry name" value="EGF_CA"/>
    <property type="match status" value="2"/>
</dbReference>
<dbReference type="Pfam" id="PF14670">
    <property type="entry name" value="FXa_inhibition"/>
    <property type="match status" value="1"/>
</dbReference>
<dbReference type="Pfam" id="PF00058">
    <property type="entry name" value="Ldl_recept_b"/>
    <property type="match status" value="3"/>
</dbReference>
<dbReference type="PIRSF" id="PIRSF001778">
    <property type="entry name" value="Pro-epidermal_growth_factor"/>
    <property type="match status" value="1"/>
</dbReference>
<dbReference type="PRINTS" id="PR00009">
    <property type="entry name" value="EGFTGF"/>
</dbReference>
<dbReference type="SMART" id="SM00181">
    <property type="entry name" value="EGF"/>
    <property type="match status" value="9"/>
</dbReference>
<dbReference type="SMART" id="SM00179">
    <property type="entry name" value="EGF_CA"/>
    <property type="match status" value="6"/>
</dbReference>
<dbReference type="SMART" id="SM00135">
    <property type="entry name" value="LY"/>
    <property type="match status" value="9"/>
</dbReference>
<dbReference type="SUPFAM" id="SSF57196">
    <property type="entry name" value="EGF/Laminin"/>
    <property type="match status" value="2"/>
</dbReference>
<dbReference type="SUPFAM" id="SSF57184">
    <property type="entry name" value="Growth factor receptor domain"/>
    <property type="match status" value="3"/>
</dbReference>
<dbReference type="SUPFAM" id="SSF63825">
    <property type="entry name" value="YWTD domain"/>
    <property type="match status" value="2"/>
</dbReference>
<dbReference type="PROSITE" id="PS00010">
    <property type="entry name" value="ASX_HYDROXYL"/>
    <property type="match status" value="3"/>
</dbReference>
<dbReference type="PROSITE" id="PS00022">
    <property type="entry name" value="EGF_1"/>
    <property type="match status" value="1"/>
</dbReference>
<dbReference type="PROSITE" id="PS01186">
    <property type="entry name" value="EGF_2"/>
    <property type="match status" value="7"/>
</dbReference>
<dbReference type="PROSITE" id="PS50026">
    <property type="entry name" value="EGF_3"/>
    <property type="match status" value="6"/>
</dbReference>
<dbReference type="PROSITE" id="PS01187">
    <property type="entry name" value="EGF_CA"/>
    <property type="match status" value="3"/>
</dbReference>
<dbReference type="PROSITE" id="PS51120">
    <property type="entry name" value="LDLRB"/>
    <property type="match status" value="9"/>
</dbReference>
<feature type="signal peptide" evidence="2">
    <location>
        <begin position="1"/>
        <end position="18"/>
    </location>
</feature>
<feature type="chain" id="PRO_0000007536" description="Pro-epidermal growth factor">
    <location>
        <begin position="19"/>
        <end position="1216"/>
    </location>
</feature>
<feature type="chain" id="PRO_0000007537" description="Epidermal growth factor" evidence="1">
    <location>
        <begin position="973"/>
        <end position="1024"/>
    </location>
</feature>
<feature type="topological domain" description="Extracellular" evidence="2">
    <location>
        <begin position="19"/>
        <end position="1033"/>
    </location>
</feature>
<feature type="transmembrane region" description="Helical" evidence="2">
    <location>
        <begin position="1034"/>
        <end position="1054"/>
    </location>
</feature>
<feature type="topological domain" description="Cytoplasmic" evidence="2">
    <location>
        <begin position="1055"/>
        <end position="1216"/>
    </location>
</feature>
<feature type="repeat" description="LDL-receptor class B 1">
    <location>
        <begin position="86"/>
        <end position="127"/>
    </location>
</feature>
<feature type="repeat" description="LDL-receptor class B 2">
    <location>
        <begin position="128"/>
        <end position="169"/>
    </location>
</feature>
<feature type="repeat" description="LDL-receptor class B 3">
    <location>
        <begin position="170"/>
        <end position="213"/>
    </location>
</feature>
<feature type="repeat" description="LDL-receptor class B 4">
    <location>
        <begin position="214"/>
        <end position="260"/>
    </location>
</feature>
<feature type="domain" description="EGF-like 1" evidence="3">
    <location>
        <begin position="316"/>
        <end position="357"/>
    </location>
</feature>
<feature type="domain" description="EGF-like 2; calcium-binding" evidence="3">
    <location>
        <begin position="358"/>
        <end position="398"/>
    </location>
</feature>
<feature type="domain" description="EGF-like 3" evidence="3">
    <location>
        <begin position="399"/>
        <end position="439"/>
    </location>
</feature>
<feature type="domain" description="EGF-like 4" evidence="3">
    <location>
        <begin position="437"/>
        <end position="479"/>
    </location>
</feature>
<feature type="repeat" description="LDL-receptor class B 5">
    <location>
        <begin position="485"/>
        <end position="525"/>
    </location>
</feature>
<feature type="repeat" description="LDL-receptor class B 6">
    <location>
        <begin position="526"/>
        <end position="568"/>
    </location>
</feature>
<feature type="repeat" description="LDL-receptor class B 7">
    <location>
        <begin position="569"/>
        <end position="611"/>
    </location>
</feature>
<feature type="repeat" description="LDL-receptor class B 8">
    <location>
        <begin position="612"/>
        <end position="655"/>
    </location>
</feature>
<feature type="repeat" description="LDL-receptor class B 9">
    <location>
        <begin position="656"/>
        <end position="698"/>
    </location>
</feature>
<feature type="domain" description="EGF-like 5" evidence="3">
    <location>
        <begin position="743"/>
        <end position="783"/>
    </location>
</feature>
<feature type="domain" description="EGF-like 6" evidence="3">
    <location>
        <begin position="834"/>
        <end position="872"/>
    </location>
</feature>
<feature type="domain" description="EGF-like 7; calcium-binding" evidence="3">
    <location>
        <begin position="873"/>
        <end position="914"/>
    </location>
</feature>
<feature type="domain" description="EGF-like 8; calcium-binding" evidence="3">
    <location>
        <begin position="915"/>
        <end position="955"/>
    </location>
</feature>
<feature type="domain" description="EGF-like 9" evidence="3">
    <location>
        <begin position="974"/>
        <end position="1015"/>
    </location>
</feature>
<feature type="region of interest" description="Disordered" evidence="4">
    <location>
        <begin position="1068"/>
        <end position="1089"/>
    </location>
</feature>
<feature type="region of interest" description="Disordered" evidence="4">
    <location>
        <begin position="1111"/>
        <end position="1139"/>
    </location>
</feature>
<feature type="region of interest" description="Disordered" evidence="4">
    <location>
        <begin position="1151"/>
        <end position="1177"/>
    </location>
</feature>
<feature type="region of interest" description="Disordered" evidence="4">
    <location>
        <begin position="1197"/>
        <end position="1216"/>
    </location>
</feature>
<feature type="compositionally biased region" description="Polar residues" evidence="4">
    <location>
        <begin position="1158"/>
        <end position="1176"/>
    </location>
</feature>
<feature type="glycosylation site" description="N-linked (GlcNAc...) asparagine" evidence="2">
    <location>
        <position position="104"/>
    </location>
</feature>
<feature type="glycosylation site" description="N-linked (GlcNAc...) asparagine" evidence="2">
    <location>
        <position position="117"/>
    </location>
</feature>
<feature type="glycosylation site" description="N-linked (GlcNAc...) asparagine" evidence="2">
    <location>
        <position position="148"/>
    </location>
</feature>
<feature type="glycosylation site" description="N-linked (GlcNAc...) asparagine" evidence="2">
    <location>
        <position position="406"/>
    </location>
</feature>
<feature type="glycosylation site" description="N-linked (GlcNAc...) asparagine" evidence="2">
    <location>
        <position position="818"/>
    </location>
</feature>
<feature type="glycosylation site" description="N-linked (GlcNAc...) asparagine" evidence="2">
    <location>
        <position position="855"/>
    </location>
</feature>
<feature type="glycosylation site" description="N-linked (GlcNAc...) asparagine" evidence="2">
    <location>
        <position position="929"/>
    </location>
</feature>
<feature type="glycosylation site" description="N-linked (GlcNAc...) asparagine" evidence="2">
    <location>
        <position position="938"/>
    </location>
</feature>
<feature type="disulfide bond" evidence="3">
    <location>
        <begin position="320"/>
        <end position="332"/>
    </location>
</feature>
<feature type="disulfide bond" evidence="3">
    <location>
        <begin position="327"/>
        <end position="341"/>
    </location>
</feature>
<feature type="disulfide bond" evidence="3">
    <location>
        <begin position="343"/>
        <end position="356"/>
    </location>
</feature>
<feature type="disulfide bond" evidence="3">
    <location>
        <begin position="362"/>
        <end position="373"/>
    </location>
</feature>
<feature type="disulfide bond" evidence="3">
    <location>
        <begin position="369"/>
        <end position="382"/>
    </location>
</feature>
<feature type="disulfide bond" evidence="3">
    <location>
        <begin position="384"/>
        <end position="397"/>
    </location>
</feature>
<feature type="disulfide bond" evidence="3">
    <location>
        <begin position="403"/>
        <end position="414"/>
    </location>
</feature>
<feature type="disulfide bond" evidence="3">
    <location>
        <begin position="410"/>
        <end position="423"/>
    </location>
</feature>
<feature type="disulfide bond" evidence="3">
    <location>
        <begin position="425"/>
        <end position="438"/>
    </location>
</feature>
<feature type="disulfide bond" evidence="3">
    <location>
        <begin position="441"/>
        <end position="453"/>
    </location>
</feature>
<feature type="disulfide bond" evidence="3">
    <location>
        <begin position="449"/>
        <end position="463"/>
    </location>
</feature>
<feature type="disulfide bond" evidence="3">
    <location>
        <begin position="465"/>
        <end position="478"/>
    </location>
</feature>
<feature type="disulfide bond" evidence="3">
    <location>
        <begin position="747"/>
        <end position="758"/>
    </location>
</feature>
<feature type="disulfide bond" evidence="3">
    <location>
        <begin position="754"/>
        <end position="767"/>
    </location>
</feature>
<feature type="disulfide bond" evidence="3">
    <location>
        <begin position="769"/>
        <end position="782"/>
    </location>
</feature>
<feature type="disulfide bond" evidence="3">
    <location>
        <begin position="838"/>
        <end position="849"/>
    </location>
</feature>
<feature type="disulfide bond" evidence="3">
    <location>
        <begin position="843"/>
        <end position="858"/>
    </location>
</feature>
<feature type="disulfide bond" evidence="3">
    <location>
        <begin position="860"/>
        <end position="871"/>
    </location>
</feature>
<feature type="disulfide bond" evidence="3">
    <location>
        <begin position="877"/>
        <end position="891"/>
    </location>
</feature>
<feature type="disulfide bond" evidence="3">
    <location>
        <begin position="884"/>
        <end position="900"/>
    </location>
</feature>
<feature type="disulfide bond" evidence="3">
    <location>
        <begin position="902"/>
        <end position="913"/>
    </location>
</feature>
<feature type="disulfide bond" evidence="3">
    <location>
        <begin position="919"/>
        <end position="932"/>
    </location>
</feature>
<feature type="disulfide bond" evidence="3">
    <location>
        <begin position="926"/>
        <end position="941"/>
    </location>
</feature>
<feature type="disulfide bond" evidence="3">
    <location>
        <begin position="943"/>
        <end position="954"/>
    </location>
</feature>
<feature type="disulfide bond" evidence="3">
    <location>
        <begin position="978"/>
        <end position="992"/>
    </location>
</feature>
<feature type="disulfide bond" evidence="3">
    <location>
        <begin position="986"/>
        <end position="1003"/>
    </location>
</feature>
<feature type="disulfide bond" evidence="3">
    <location>
        <begin position="1005"/>
        <end position="1014"/>
    </location>
</feature>
<name>EGF_CANLF</name>
<proteinExistence type="evidence at transcript level"/>
<gene>
    <name type="primary">EGF</name>
</gene>
<keyword id="KW-1015">Disulfide bond</keyword>
<keyword id="KW-0245">EGF-like domain</keyword>
<keyword id="KW-0325">Glycoprotein</keyword>
<keyword id="KW-0339">Growth factor</keyword>
<keyword id="KW-0472">Membrane</keyword>
<keyword id="KW-1185">Reference proteome</keyword>
<keyword id="KW-0677">Repeat</keyword>
<keyword id="KW-0732">Signal</keyword>
<keyword id="KW-0812">Transmembrane</keyword>
<keyword id="KW-1133">Transmembrane helix</keyword>
<reference key="1">
    <citation type="submission" date="2000-10" db="EMBL/GenBank/DDBJ databases">
        <title>Canis familiaris epidermal growth factor (EGF) cDNA.</title>
        <authorList>
            <person name="Ohashi K."/>
            <person name="Takahashi N."/>
            <person name="Sugimoto C."/>
            <person name="Onuma M."/>
        </authorList>
    </citation>
    <scope>NUCLEOTIDE SEQUENCE [MRNA]</scope>
</reference>
<comment type="function">
    <text evidence="1">EGF stimulates the growth of various epidermal and epithelial tissues in vivo and in vitro and of some fibroblasts in cell culture. Magnesiotropic hormone that stimulates magnesium reabsorption in the renal distal convoluted tubule via engagement of EGFR and activation of the magnesium channel TRPM6 (By similarity).</text>
</comment>
<comment type="subunit">
    <text evidence="1">Interacts with EGFR and promotes EGFR dimerization. Interacts with RHBDF1; may retain EGF in the endoplasmic reticulum and regulates its degradation through the endoplasmic reticulum-associated degradation (ERAD) (By similarity). Interacts with RHBDF2 (By similarity).</text>
</comment>
<comment type="subcellular location">
    <subcellularLocation>
        <location evidence="1">Membrane</location>
        <topology evidence="1">Single-pass type I membrane protein</topology>
    </subcellularLocation>
</comment>
<sequence length="1216" mass="134414">MLLPLIILWPVVFKCSFASLSDPENWNCPEVSPSGKGSPACVGPAPFLIFSHGISIFRIDLEGTNHEQLVADAGVSVIMDFHYNKERIYWVDPERQLLQRVFLNGTRQERVCNIEKNVSGMAINWINEELIWSNQQEGIITVTDMKGNNSRVLLRALNYPANVAIDPIERFIFWSSEVAVAGSLHRADLNGVEEKILLQTSERITAVSLDVLDKQLFWIQYSRDGSNSHIYSCNYDGGSVHLSKHLTQHNFFAMSLFGNQIFYSTWKKKTIWIANKHSGKDMVRINLDSSFVPPGGIKVVHPLLQPKAESGTWAPDQKLCKWKQGNCRGSTCGQDSKSYSCTCAEGYTLSQDGKYCEDVNECAFWNHGCTLGCENIPGSYYCTCPVGFILLPDGKRCHQLIACPSNTSKCSHDCVLTSDGPICFCPEGSVLEADGKTCSGCSSPDNGGCSQLCLPLSPVSWECGCFPGYDLQLDKQSCAASGPQPFLLFANSQDIRHMHFDGTDYGTLLSQQMGMVFALDHDPVENKIYFAHTALKWIERANMDGSQRERLIEEGVDVPEGLAIDWIDRKFYWTDSGKSLIEGSDLNGKHREIIIKEDISQPRGIAVHPMAKRLFWTDMGINPRIESSSLQGIGRLVIASSDLVWPSGITIDYVTDKLYWCDTKLSVIEMANLDGSKRQRLAQNDVGHPFAMAVFEDHVWFSDWTMPSIIRVDKRTGKNRVRLRGSMLKPSSLVVVHPLAKPGAQPCLYQNGGCEHICKERFGTAQCLCREGFVKAPDGKMCLALNGHQIPAVGSEADLSNHVTPGDVLPRSEGFEDNITESQHMLVAEIMVSDADDCAPVGCSTWAECVSEGENATCQCLKGFTGDGKLCFDIDECEMGITICPPTSSKCVNTEGGYVCQCSEGYRGDGIHCLDINECQLGMHTCGENATCTNMEGNYTCMCAGSLSEPGQICADSTPPSHPMEDSHYSVRNGYRECPSSYDGYCLYNGVCMYIEAVDRYACNCVFGYVGERCQHRDLKWELRHAGQGRQRQVAAVAVGVVVLVLLLLLGLGGAHCYRTKKLSSKNLKNPYEEPSREGSSSRPSDSEARMASFPQPWFVVIKEHQNLRNGSQPMALKDGESADVSQFSSPEPGSVKRTSWRNEHQLYKDTEQGCCTPPSSNRGTGSQSMEQSFSVPSYEAQPIALGVEKPQSLLSAKPLLQQRAPDPPHQMKLIQ</sequence>
<accession>Q9BEA0</accession>
<evidence type="ECO:0000250" key="1"/>
<evidence type="ECO:0000255" key="2"/>
<evidence type="ECO:0000255" key="3">
    <source>
        <dbReference type="PROSITE-ProRule" id="PRU00076"/>
    </source>
</evidence>
<evidence type="ECO:0000256" key="4">
    <source>
        <dbReference type="SAM" id="MobiDB-lite"/>
    </source>
</evidence>